<gene>
    <name evidence="1" type="primary">rpsP</name>
    <name type="ordered locus">MGAS2096_Spy0716</name>
</gene>
<organism>
    <name type="scientific">Streptococcus pyogenes serotype M12 (strain MGAS2096)</name>
    <dbReference type="NCBI Taxonomy" id="370553"/>
    <lineage>
        <taxon>Bacteria</taxon>
        <taxon>Bacillati</taxon>
        <taxon>Bacillota</taxon>
        <taxon>Bacilli</taxon>
        <taxon>Lactobacillales</taxon>
        <taxon>Streptococcaceae</taxon>
        <taxon>Streptococcus</taxon>
    </lineage>
</organism>
<accession>Q1JCE0</accession>
<feature type="chain" id="PRO_1000049359" description="Small ribosomal subunit protein bS16">
    <location>
        <begin position="1"/>
        <end position="90"/>
    </location>
</feature>
<sequence>MAVKIRLTRMGSKKKPFYRINVADSRAPRDGRFIETVGTYNPLVAENQITIKEDRVLEWLSKGAQPSDTVRNILSKAGVMAKFHDQKFSK</sequence>
<reference key="1">
    <citation type="journal article" date="2006" name="Proc. Natl. Acad. Sci. U.S.A.">
        <title>Molecular genetic anatomy of inter- and intraserotype variation in the human bacterial pathogen group A Streptococcus.</title>
        <authorList>
            <person name="Beres S.B."/>
            <person name="Richter E.W."/>
            <person name="Nagiec M.J."/>
            <person name="Sumby P."/>
            <person name="Porcella S.F."/>
            <person name="DeLeo F.R."/>
            <person name="Musser J.M."/>
        </authorList>
    </citation>
    <scope>NUCLEOTIDE SEQUENCE [LARGE SCALE GENOMIC DNA]</scope>
    <source>
        <strain>MGAS2096</strain>
    </source>
</reference>
<dbReference type="EMBL" id="CP000261">
    <property type="protein sequence ID" value="ABF35768.1"/>
    <property type="molecule type" value="Genomic_DNA"/>
</dbReference>
<dbReference type="SMR" id="Q1JCE0"/>
<dbReference type="KEGG" id="spj:MGAS2096_Spy0716"/>
<dbReference type="HOGENOM" id="CLU_100590_5_0_9"/>
<dbReference type="GO" id="GO:0005737">
    <property type="term" value="C:cytoplasm"/>
    <property type="evidence" value="ECO:0007669"/>
    <property type="project" value="UniProtKB-ARBA"/>
</dbReference>
<dbReference type="GO" id="GO:0015935">
    <property type="term" value="C:small ribosomal subunit"/>
    <property type="evidence" value="ECO:0007669"/>
    <property type="project" value="TreeGrafter"/>
</dbReference>
<dbReference type="GO" id="GO:0003735">
    <property type="term" value="F:structural constituent of ribosome"/>
    <property type="evidence" value="ECO:0007669"/>
    <property type="project" value="InterPro"/>
</dbReference>
<dbReference type="GO" id="GO:0006412">
    <property type="term" value="P:translation"/>
    <property type="evidence" value="ECO:0007669"/>
    <property type="project" value="UniProtKB-UniRule"/>
</dbReference>
<dbReference type="FunFam" id="3.30.1320.10:FF:000002">
    <property type="entry name" value="30S ribosomal protein S16"/>
    <property type="match status" value="1"/>
</dbReference>
<dbReference type="Gene3D" id="3.30.1320.10">
    <property type="match status" value="1"/>
</dbReference>
<dbReference type="HAMAP" id="MF_00385">
    <property type="entry name" value="Ribosomal_bS16"/>
    <property type="match status" value="1"/>
</dbReference>
<dbReference type="InterPro" id="IPR000307">
    <property type="entry name" value="Ribosomal_bS16"/>
</dbReference>
<dbReference type="InterPro" id="IPR023803">
    <property type="entry name" value="Ribosomal_bS16_dom_sf"/>
</dbReference>
<dbReference type="NCBIfam" id="TIGR00002">
    <property type="entry name" value="S16"/>
    <property type="match status" value="1"/>
</dbReference>
<dbReference type="PANTHER" id="PTHR12919">
    <property type="entry name" value="30S RIBOSOMAL PROTEIN S16"/>
    <property type="match status" value="1"/>
</dbReference>
<dbReference type="PANTHER" id="PTHR12919:SF20">
    <property type="entry name" value="SMALL RIBOSOMAL SUBUNIT PROTEIN BS16M"/>
    <property type="match status" value="1"/>
</dbReference>
<dbReference type="Pfam" id="PF00886">
    <property type="entry name" value="Ribosomal_S16"/>
    <property type="match status" value="1"/>
</dbReference>
<dbReference type="SUPFAM" id="SSF54565">
    <property type="entry name" value="Ribosomal protein S16"/>
    <property type="match status" value="1"/>
</dbReference>
<name>RS16_STRPB</name>
<keyword id="KW-0687">Ribonucleoprotein</keyword>
<keyword id="KW-0689">Ribosomal protein</keyword>
<evidence type="ECO:0000255" key="1">
    <source>
        <dbReference type="HAMAP-Rule" id="MF_00385"/>
    </source>
</evidence>
<evidence type="ECO:0000305" key="2"/>
<protein>
    <recommendedName>
        <fullName evidence="1">Small ribosomal subunit protein bS16</fullName>
    </recommendedName>
    <alternativeName>
        <fullName evidence="2">30S ribosomal protein S16</fullName>
    </alternativeName>
</protein>
<proteinExistence type="inferred from homology"/>
<comment type="similarity">
    <text evidence="1">Belongs to the bacterial ribosomal protein bS16 family.</text>
</comment>